<dbReference type="EC" id="1.3.8.8" evidence="3"/>
<dbReference type="EMBL" id="D89478">
    <property type="protein sequence ID" value="BAA13965.1"/>
    <property type="molecule type" value="mRNA"/>
</dbReference>
<dbReference type="RefSeq" id="NP_999062.1">
    <property type="nucleotide sequence ID" value="NM_213897.1"/>
</dbReference>
<dbReference type="SMR" id="P79274"/>
<dbReference type="FunCoup" id="P79274">
    <property type="interactions" value="96"/>
</dbReference>
<dbReference type="STRING" id="9823.ENSSSCP00000017114"/>
<dbReference type="PaxDb" id="9823-ENSSSCP00000017114"/>
<dbReference type="PeptideAtlas" id="P79274"/>
<dbReference type="Ensembl" id="ENSSSCT00000017589.5">
    <property type="protein sequence ID" value="ENSSSCP00000017114.2"/>
    <property type="gene ID" value="ENSSSCG00000016156.5"/>
</dbReference>
<dbReference type="Ensembl" id="ENSSSCT00015017043.1">
    <property type="protein sequence ID" value="ENSSSCP00015006663.1"/>
    <property type="gene ID" value="ENSSSCG00015012922.1"/>
</dbReference>
<dbReference type="Ensembl" id="ENSSSCT00025000094.1">
    <property type="protein sequence ID" value="ENSSSCP00025000053.1"/>
    <property type="gene ID" value="ENSSSCG00025000061.1"/>
</dbReference>
<dbReference type="Ensembl" id="ENSSSCT00030014008.1">
    <property type="protein sequence ID" value="ENSSSCP00030006270.1"/>
    <property type="gene ID" value="ENSSSCG00030010233.1"/>
</dbReference>
<dbReference type="Ensembl" id="ENSSSCT00035050462.1">
    <property type="protein sequence ID" value="ENSSSCP00035020214.1"/>
    <property type="gene ID" value="ENSSSCG00035038040.1"/>
</dbReference>
<dbReference type="Ensembl" id="ENSSSCT00040071392.1">
    <property type="protein sequence ID" value="ENSSSCP00040030463.1"/>
    <property type="gene ID" value="ENSSSCG00040052819.1"/>
</dbReference>
<dbReference type="Ensembl" id="ENSSSCT00045067169.1">
    <property type="protein sequence ID" value="ENSSSCP00045047705.1"/>
    <property type="gene ID" value="ENSSSCG00045038693.1"/>
</dbReference>
<dbReference type="Ensembl" id="ENSSSCT00050014959.1">
    <property type="protein sequence ID" value="ENSSSCP00050006139.1"/>
    <property type="gene ID" value="ENSSSCG00050011103.1"/>
</dbReference>
<dbReference type="Ensembl" id="ENSSSCT00055042357.1">
    <property type="protein sequence ID" value="ENSSSCP00055033724.1"/>
    <property type="gene ID" value="ENSSSCG00055021558.1"/>
</dbReference>
<dbReference type="Ensembl" id="ENSSSCT00060068718.1">
    <property type="protein sequence ID" value="ENSSSCP00060029535.1"/>
    <property type="gene ID" value="ENSSSCG00060050533.1"/>
</dbReference>
<dbReference type="Ensembl" id="ENSSSCT00065070787.1">
    <property type="protein sequence ID" value="ENSSSCP00065030859.1"/>
    <property type="gene ID" value="ENSSSCG00065051662.1"/>
</dbReference>
<dbReference type="Ensembl" id="ENSSSCT00085023882">
    <property type="protein sequence ID" value="ENSSSCP00085016398"/>
    <property type="gene ID" value="ENSSSCG00085012726"/>
</dbReference>
<dbReference type="Ensembl" id="ENSSSCT00090032370">
    <property type="protein sequence ID" value="ENSSSCP00090019960"/>
    <property type="gene ID" value="ENSSSCG00090018375"/>
</dbReference>
<dbReference type="Ensembl" id="ENSSSCT00105020843">
    <property type="protein sequence ID" value="ENSSSCP00105015027"/>
    <property type="gene ID" value="ENSSSCG00105010422"/>
</dbReference>
<dbReference type="Ensembl" id="ENSSSCT00110009825">
    <property type="protein sequence ID" value="ENSSSCP00110006892"/>
    <property type="gene ID" value="ENSSSCG00110005042"/>
</dbReference>
<dbReference type="Ensembl" id="ENSSSCT00115001096">
    <property type="protein sequence ID" value="ENSSSCP00115001026"/>
    <property type="gene ID" value="ENSSSCG00115000670"/>
</dbReference>
<dbReference type="Ensembl" id="ENSSSCT00130060087">
    <property type="protein sequence ID" value="ENSSSCP00130043057"/>
    <property type="gene ID" value="ENSSSCG00130030783"/>
</dbReference>
<dbReference type="GeneID" id="396931"/>
<dbReference type="KEGG" id="ssc:396931"/>
<dbReference type="CTD" id="33"/>
<dbReference type="VGNC" id="VGNC:96475">
    <property type="gene designation" value="ACADL"/>
</dbReference>
<dbReference type="eggNOG" id="KOG0141">
    <property type="taxonomic scope" value="Eukaryota"/>
</dbReference>
<dbReference type="GeneTree" id="ENSGT00940000157652"/>
<dbReference type="HOGENOM" id="CLU_018204_0_1_1"/>
<dbReference type="InParanoid" id="P79274"/>
<dbReference type="OMA" id="MWEYPVA"/>
<dbReference type="OrthoDB" id="9988775at2759"/>
<dbReference type="TreeFam" id="TF105054"/>
<dbReference type="Reactome" id="R-SSC-77285">
    <property type="pathway name" value="Beta oxidation of myristoyl-CoA to lauroyl-CoA"/>
</dbReference>
<dbReference type="Reactome" id="R-SSC-77310">
    <property type="pathway name" value="Beta oxidation of lauroyl-CoA to decanoyl-CoA-CoA"/>
</dbReference>
<dbReference type="UniPathway" id="UPA00660"/>
<dbReference type="Proteomes" id="UP000008227">
    <property type="component" value="Chromosome 15"/>
</dbReference>
<dbReference type="Proteomes" id="UP000314985">
    <property type="component" value="Unplaced"/>
</dbReference>
<dbReference type="Proteomes" id="UP000694570">
    <property type="component" value="Unplaced"/>
</dbReference>
<dbReference type="Proteomes" id="UP000694571">
    <property type="component" value="Unplaced"/>
</dbReference>
<dbReference type="Proteomes" id="UP000694720">
    <property type="component" value="Unplaced"/>
</dbReference>
<dbReference type="Proteomes" id="UP000694722">
    <property type="component" value="Unplaced"/>
</dbReference>
<dbReference type="Proteomes" id="UP000694723">
    <property type="component" value="Unplaced"/>
</dbReference>
<dbReference type="Proteomes" id="UP000694724">
    <property type="component" value="Unplaced"/>
</dbReference>
<dbReference type="Proteomes" id="UP000694725">
    <property type="component" value="Unplaced"/>
</dbReference>
<dbReference type="Proteomes" id="UP000694726">
    <property type="component" value="Unplaced"/>
</dbReference>
<dbReference type="Proteomes" id="UP000694727">
    <property type="component" value="Unplaced"/>
</dbReference>
<dbReference type="Proteomes" id="UP000694728">
    <property type="component" value="Unplaced"/>
</dbReference>
<dbReference type="Bgee" id="ENSSSCG00000016156">
    <property type="expression patterns" value="Expressed in heart left ventricle and 44 other cell types or tissues"/>
</dbReference>
<dbReference type="ExpressionAtlas" id="P79274">
    <property type="expression patterns" value="baseline and differential"/>
</dbReference>
<dbReference type="GO" id="GO:0005737">
    <property type="term" value="C:cytoplasm"/>
    <property type="evidence" value="ECO:0000318"/>
    <property type="project" value="GO_Central"/>
</dbReference>
<dbReference type="GO" id="GO:0005759">
    <property type="term" value="C:mitochondrial matrix"/>
    <property type="evidence" value="ECO:0007669"/>
    <property type="project" value="UniProtKB-SubCell"/>
</dbReference>
<dbReference type="GO" id="GO:0005739">
    <property type="term" value="C:mitochondrion"/>
    <property type="evidence" value="ECO:0000318"/>
    <property type="project" value="GO_Central"/>
</dbReference>
<dbReference type="GO" id="GO:0050660">
    <property type="term" value="F:flavin adenine dinucleotide binding"/>
    <property type="evidence" value="ECO:0000318"/>
    <property type="project" value="GO_Central"/>
</dbReference>
<dbReference type="GO" id="GO:0004466">
    <property type="term" value="F:long-chain fatty acyl-CoA dehydrogenase activity"/>
    <property type="evidence" value="ECO:0000318"/>
    <property type="project" value="GO_Central"/>
</dbReference>
<dbReference type="GO" id="GO:0019254">
    <property type="term" value="P:carnitine metabolic process, CoA-linked"/>
    <property type="evidence" value="ECO:0000318"/>
    <property type="project" value="GO_Central"/>
</dbReference>
<dbReference type="GO" id="GO:0033539">
    <property type="term" value="P:fatty acid beta-oxidation using acyl-CoA dehydrogenase"/>
    <property type="evidence" value="ECO:0000318"/>
    <property type="project" value="GO_Central"/>
</dbReference>
<dbReference type="GO" id="GO:0042758">
    <property type="term" value="P:long-chain fatty acid catabolic process"/>
    <property type="evidence" value="ECO:0000318"/>
    <property type="project" value="GO_Central"/>
</dbReference>
<dbReference type="CDD" id="cd01160">
    <property type="entry name" value="LCAD"/>
    <property type="match status" value="1"/>
</dbReference>
<dbReference type="FunFam" id="2.40.110.10:FF:000002">
    <property type="entry name" value="Acyl-CoA dehydrogenase fadE12"/>
    <property type="match status" value="1"/>
</dbReference>
<dbReference type="FunFam" id="1.20.140.10:FF:000020">
    <property type="entry name" value="Long-chain specific acyl-CoA dehydrogenase, mitochondrial"/>
    <property type="match status" value="1"/>
</dbReference>
<dbReference type="FunFam" id="1.10.540.10:FF:000017">
    <property type="entry name" value="long-chain specific acyl-CoA dehydrogenase, mitochondrial"/>
    <property type="match status" value="1"/>
</dbReference>
<dbReference type="Gene3D" id="1.10.540.10">
    <property type="entry name" value="Acyl-CoA dehydrogenase/oxidase, N-terminal domain"/>
    <property type="match status" value="1"/>
</dbReference>
<dbReference type="Gene3D" id="2.40.110.10">
    <property type="entry name" value="Butyryl-CoA Dehydrogenase, subunit A, domain 2"/>
    <property type="match status" value="1"/>
</dbReference>
<dbReference type="Gene3D" id="1.20.140.10">
    <property type="entry name" value="Butyryl-CoA Dehydrogenase, subunit A, domain 3"/>
    <property type="match status" value="1"/>
</dbReference>
<dbReference type="InterPro" id="IPR050741">
    <property type="entry name" value="Acyl-CoA_dehydrogenase"/>
</dbReference>
<dbReference type="InterPro" id="IPR006089">
    <property type="entry name" value="Acyl-CoA_DH_CS"/>
</dbReference>
<dbReference type="InterPro" id="IPR006091">
    <property type="entry name" value="Acyl-CoA_Oxase/DH_mid-dom"/>
</dbReference>
<dbReference type="InterPro" id="IPR046373">
    <property type="entry name" value="Acyl-CoA_Oxase/DH_mid-dom_sf"/>
</dbReference>
<dbReference type="InterPro" id="IPR036250">
    <property type="entry name" value="AcylCo_DH-like_C"/>
</dbReference>
<dbReference type="InterPro" id="IPR009075">
    <property type="entry name" value="AcylCo_DH/oxidase_C"/>
</dbReference>
<dbReference type="InterPro" id="IPR013786">
    <property type="entry name" value="AcylCoA_DH/ox_N"/>
</dbReference>
<dbReference type="InterPro" id="IPR037069">
    <property type="entry name" value="AcylCoA_DH/ox_N_sf"/>
</dbReference>
<dbReference type="InterPro" id="IPR009100">
    <property type="entry name" value="AcylCoA_DH/oxidase_NM_dom_sf"/>
</dbReference>
<dbReference type="InterPro" id="IPR034179">
    <property type="entry name" value="LCAD"/>
</dbReference>
<dbReference type="PANTHER" id="PTHR48083:SF20">
    <property type="entry name" value="LONG-CHAIN SPECIFIC ACYL-COA DEHYDROGENASE, MITOCHONDRIAL"/>
    <property type="match status" value="1"/>
</dbReference>
<dbReference type="PANTHER" id="PTHR48083">
    <property type="entry name" value="MEDIUM-CHAIN SPECIFIC ACYL-COA DEHYDROGENASE, MITOCHONDRIAL-RELATED"/>
    <property type="match status" value="1"/>
</dbReference>
<dbReference type="Pfam" id="PF00441">
    <property type="entry name" value="Acyl-CoA_dh_1"/>
    <property type="match status" value="1"/>
</dbReference>
<dbReference type="Pfam" id="PF02770">
    <property type="entry name" value="Acyl-CoA_dh_M"/>
    <property type="match status" value="1"/>
</dbReference>
<dbReference type="Pfam" id="PF02771">
    <property type="entry name" value="Acyl-CoA_dh_N"/>
    <property type="match status" value="1"/>
</dbReference>
<dbReference type="SUPFAM" id="SSF47203">
    <property type="entry name" value="Acyl-CoA dehydrogenase C-terminal domain-like"/>
    <property type="match status" value="1"/>
</dbReference>
<dbReference type="SUPFAM" id="SSF56645">
    <property type="entry name" value="Acyl-CoA dehydrogenase NM domain-like"/>
    <property type="match status" value="1"/>
</dbReference>
<dbReference type="PROSITE" id="PS00072">
    <property type="entry name" value="ACYL_COA_DH_1"/>
    <property type="match status" value="1"/>
</dbReference>
<dbReference type="PROSITE" id="PS00073">
    <property type="entry name" value="ACYL_COA_DH_2"/>
    <property type="match status" value="1"/>
</dbReference>
<protein>
    <recommendedName>
        <fullName>Long-chain specific acyl-CoA dehydrogenase, mitochondrial</fullName>
        <shortName>LCAD</shortName>
        <ecNumber evidence="3">1.3.8.8</ecNumber>
    </recommendedName>
</protein>
<comment type="function">
    <text evidence="1 3">Long-chain specific acyl-CoA dehydrogenase is one of the acyl-CoA dehydrogenases that catalyze the first step of mitochondrial fatty acid beta-oxidation, an aerobic process breaking down fatty acids into acetyl-CoA and allowing the production of energy from fats. The first step of fatty acid beta-oxidation consists in the removal of one hydrogen from C-2 and C-3 of the straight-chain fatty acyl-CoA thioester, resulting in the formation of trans-2-enoyl-CoA (By similarity). Among the different mitochondrial acyl-CoA dehydrogenases, long-chain specific acyl-CoA dehydrogenase can act on saturated and unsaturated acyl-CoAs with 6 to 24 carbons with a preference for 8 to 18 carbons long primary chains (By similarity).</text>
</comment>
<comment type="catalytic activity">
    <reaction evidence="3">
        <text>a long-chain 2,3-saturated fatty acyl-CoA + oxidized [electron-transfer flavoprotein] + H(+) = a long-chain (2E)-enoyl-CoA + reduced [electron-transfer flavoprotein]</text>
        <dbReference type="Rhea" id="RHEA:17721"/>
        <dbReference type="Rhea" id="RHEA-COMP:10685"/>
        <dbReference type="Rhea" id="RHEA-COMP:10686"/>
        <dbReference type="ChEBI" id="CHEBI:15378"/>
        <dbReference type="ChEBI" id="CHEBI:57692"/>
        <dbReference type="ChEBI" id="CHEBI:58307"/>
        <dbReference type="ChEBI" id="CHEBI:83721"/>
        <dbReference type="ChEBI" id="CHEBI:83727"/>
        <dbReference type="EC" id="1.3.8.8"/>
    </reaction>
    <physiologicalReaction direction="left-to-right" evidence="3">
        <dbReference type="Rhea" id="RHEA:17722"/>
    </physiologicalReaction>
</comment>
<comment type="catalytic activity">
    <reaction evidence="3">
        <text>hexanoyl-CoA + oxidized [electron-transfer flavoprotein] + H(+) = (2E)-hexenoyl-CoA + reduced [electron-transfer flavoprotein]</text>
        <dbReference type="Rhea" id="RHEA:43464"/>
        <dbReference type="Rhea" id="RHEA-COMP:10685"/>
        <dbReference type="Rhea" id="RHEA-COMP:10686"/>
        <dbReference type="ChEBI" id="CHEBI:15378"/>
        <dbReference type="ChEBI" id="CHEBI:57692"/>
        <dbReference type="ChEBI" id="CHEBI:58307"/>
        <dbReference type="ChEBI" id="CHEBI:62077"/>
        <dbReference type="ChEBI" id="CHEBI:62620"/>
    </reaction>
    <physiologicalReaction direction="left-to-right" evidence="3">
        <dbReference type="Rhea" id="RHEA:43465"/>
    </physiologicalReaction>
</comment>
<comment type="catalytic activity">
    <reaction evidence="3">
        <text>octanoyl-CoA + oxidized [electron-transfer flavoprotein] + H(+) = (2E)-octenoyl-CoA + reduced [electron-transfer flavoprotein]</text>
        <dbReference type="Rhea" id="RHEA:48180"/>
        <dbReference type="Rhea" id="RHEA-COMP:10685"/>
        <dbReference type="Rhea" id="RHEA-COMP:10686"/>
        <dbReference type="ChEBI" id="CHEBI:15378"/>
        <dbReference type="ChEBI" id="CHEBI:57386"/>
        <dbReference type="ChEBI" id="CHEBI:57692"/>
        <dbReference type="ChEBI" id="CHEBI:58307"/>
        <dbReference type="ChEBI" id="CHEBI:62242"/>
    </reaction>
    <physiologicalReaction direction="left-to-right" evidence="3">
        <dbReference type="Rhea" id="RHEA:48181"/>
    </physiologicalReaction>
</comment>
<comment type="catalytic activity">
    <reaction evidence="3">
        <text>decanoyl-CoA + oxidized [electron-transfer flavoprotein] + H(+) = (2E)-decenoyl-CoA + reduced [electron-transfer flavoprotein]</text>
        <dbReference type="Rhea" id="RHEA:48176"/>
        <dbReference type="Rhea" id="RHEA-COMP:10685"/>
        <dbReference type="Rhea" id="RHEA-COMP:10686"/>
        <dbReference type="ChEBI" id="CHEBI:15378"/>
        <dbReference type="ChEBI" id="CHEBI:57692"/>
        <dbReference type="ChEBI" id="CHEBI:58307"/>
        <dbReference type="ChEBI" id="CHEBI:61406"/>
        <dbReference type="ChEBI" id="CHEBI:61430"/>
    </reaction>
    <physiologicalReaction direction="left-to-right" evidence="3">
        <dbReference type="Rhea" id="RHEA:48177"/>
    </physiologicalReaction>
</comment>
<comment type="catalytic activity">
    <reaction evidence="3">
        <text>dodecanoyl-CoA + oxidized [electron-transfer flavoprotein] + H(+) = (2E)-dodecenoyl-CoA + reduced [electron-transfer flavoprotein]</text>
        <dbReference type="Rhea" id="RHEA:47296"/>
        <dbReference type="Rhea" id="RHEA-COMP:10685"/>
        <dbReference type="Rhea" id="RHEA-COMP:10686"/>
        <dbReference type="ChEBI" id="CHEBI:15378"/>
        <dbReference type="ChEBI" id="CHEBI:57330"/>
        <dbReference type="ChEBI" id="CHEBI:57375"/>
        <dbReference type="ChEBI" id="CHEBI:57692"/>
        <dbReference type="ChEBI" id="CHEBI:58307"/>
    </reaction>
    <physiologicalReaction direction="left-to-right" evidence="3">
        <dbReference type="Rhea" id="RHEA:47297"/>
    </physiologicalReaction>
</comment>
<comment type="catalytic activity">
    <reaction evidence="3">
        <text>tetradecanoyl-CoA + oxidized [electron-transfer flavoprotein] + H(+) = (2E)-tetradecenoyl-CoA + reduced [electron-transfer flavoprotein]</text>
        <dbReference type="Rhea" id="RHEA:47316"/>
        <dbReference type="Rhea" id="RHEA-COMP:10685"/>
        <dbReference type="Rhea" id="RHEA-COMP:10686"/>
        <dbReference type="ChEBI" id="CHEBI:15378"/>
        <dbReference type="ChEBI" id="CHEBI:57385"/>
        <dbReference type="ChEBI" id="CHEBI:57692"/>
        <dbReference type="ChEBI" id="CHEBI:58307"/>
        <dbReference type="ChEBI" id="CHEBI:61405"/>
    </reaction>
    <physiologicalReaction direction="left-to-right" evidence="3">
        <dbReference type="Rhea" id="RHEA:47317"/>
    </physiologicalReaction>
</comment>
<comment type="catalytic activity">
    <reaction evidence="3">
        <text>oxidized [electron-transfer flavoprotein] + hexadecanoyl-CoA + H(+) = (2E)-hexadecenoyl-CoA + reduced [electron-transfer flavoprotein]</text>
        <dbReference type="Rhea" id="RHEA:43448"/>
        <dbReference type="Rhea" id="RHEA-COMP:10685"/>
        <dbReference type="Rhea" id="RHEA-COMP:10686"/>
        <dbReference type="ChEBI" id="CHEBI:15378"/>
        <dbReference type="ChEBI" id="CHEBI:57379"/>
        <dbReference type="ChEBI" id="CHEBI:57692"/>
        <dbReference type="ChEBI" id="CHEBI:58307"/>
        <dbReference type="ChEBI" id="CHEBI:61526"/>
    </reaction>
    <physiologicalReaction direction="left-to-right" evidence="3">
        <dbReference type="Rhea" id="RHEA:43449"/>
    </physiologicalReaction>
</comment>
<comment type="catalytic activity">
    <reaction evidence="3">
        <text>octadecanoyl-CoA + oxidized [electron-transfer flavoprotein] + H(+) = (2E)-octadecenoyl-CoA + reduced [electron-transfer flavoprotein]</text>
        <dbReference type="Rhea" id="RHEA:47240"/>
        <dbReference type="Rhea" id="RHEA-COMP:10685"/>
        <dbReference type="Rhea" id="RHEA-COMP:10686"/>
        <dbReference type="ChEBI" id="CHEBI:15378"/>
        <dbReference type="ChEBI" id="CHEBI:57394"/>
        <dbReference type="ChEBI" id="CHEBI:57692"/>
        <dbReference type="ChEBI" id="CHEBI:58307"/>
        <dbReference type="ChEBI" id="CHEBI:71412"/>
    </reaction>
    <physiologicalReaction direction="left-to-right" evidence="3">
        <dbReference type="Rhea" id="RHEA:47241"/>
    </physiologicalReaction>
</comment>
<comment type="catalytic activity">
    <reaction evidence="3">
        <text>eicosanoyl-CoA + oxidized [electron-transfer flavoprotein] + H(+) = (2E)-eicosenoyl-CoA + reduced [electron-transfer flavoprotein]</text>
        <dbReference type="Rhea" id="RHEA:47236"/>
        <dbReference type="Rhea" id="RHEA-COMP:10685"/>
        <dbReference type="Rhea" id="RHEA-COMP:10686"/>
        <dbReference type="ChEBI" id="CHEBI:15378"/>
        <dbReference type="ChEBI" id="CHEBI:57380"/>
        <dbReference type="ChEBI" id="CHEBI:57692"/>
        <dbReference type="ChEBI" id="CHEBI:58307"/>
        <dbReference type="ChEBI" id="CHEBI:74691"/>
    </reaction>
    <physiologicalReaction direction="left-to-right" evidence="3">
        <dbReference type="Rhea" id="RHEA:47237"/>
    </physiologicalReaction>
</comment>
<comment type="catalytic activity">
    <reaction evidence="3">
        <text>docosanoyl-CoA + oxidized [electron-transfer flavoprotein] + H(+) = (2E)-docosenoyl-CoA + reduced [electron-transfer flavoprotein]</text>
        <dbReference type="Rhea" id="RHEA:47228"/>
        <dbReference type="Rhea" id="RHEA-COMP:10685"/>
        <dbReference type="Rhea" id="RHEA-COMP:10686"/>
        <dbReference type="ChEBI" id="CHEBI:15378"/>
        <dbReference type="ChEBI" id="CHEBI:57692"/>
        <dbReference type="ChEBI" id="CHEBI:58307"/>
        <dbReference type="ChEBI" id="CHEBI:65059"/>
        <dbReference type="ChEBI" id="CHEBI:74692"/>
    </reaction>
    <physiologicalReaction direction="left-to-right" evidence="3">
        <dbReference type="Rhea" id="RHEA:47229"/>
    </physiologicalReaction>
</comment>
<comment type="catalytic activity">
    <reaction evidence="3">
        <text>tetracosanoyl-CoA + oxidized [electron-transfer flavoprotein] + H(+) = (2E)-tetracosenoyl-CoA + reduced [electron-transfer flavoprotein]</text>
        <dbReference type="Rhea" id="RHEA:47232"/>
        <dbReference type="Rhea" id="RHEA-COMP:10685"/>
        <dbReference type="Rhea" id="RHEA-COMP:10686"/>
        <dbReference type="ChEBI" id="CHEBI:15378"/>
        <dbReference type="ChEBI" id="CHEBI:57692"/>
        <dbReference type="ChEBI" id="CHEBI:58307"/>
        <dbReference type="ChEBI" id="CHEBI:65052"/>
        <dbReference type="ChEBI" id="CHEBI:74693"/>
    </reaction>
    <physiologicalReaction direction="left-to-right" evidence="3">
        <dbReference type="Rhea" id="RHEA:47233"/>
    </physiologicalReaction>
</comment>
<comment type="catalytic activity">
    <reaction evidence="1">
        <text>(5E)-tetradecenoyl-CoA + oxidized [electron-transfer flavoprotein] + H(+) = (2E,5E)-tetradecadienoyl-CoA + reduced [electron-transfer flavoprotein]</text>
        <dbReference type="Rhea" id="RHEA:49828"/>
        <dbReference type="Rhea" id="RHEA-COMP:10685"/>
        <dbReference type="Rhea" id="RHEA-COMP:10686"/>
        <dbReference type="ChEBI" id="CHEBI:15378"/>
        <dbReference type="ChEBI" id="CHEBI:57692"/>
        <dbReference type="ChEBI" id="CHEBI:58307"/>
        <dbReference type="ChEBI" id="CHEBI:131943"/>
        <dbReference type="ChEBI" id="CHEBI:131944"/>
    </reaction>
</comment>
<comment type="catalytic activity">
    <reaction evidence="1">
        <text>(5Z)-tetradecenoyl-CoA + oxidized [electron-transfer flavoprotein] + H(+) = (2E,5Z)-tetradecadienoyl-CoA + reduced [electron-transfer flavoprotein]</text>
        <dbReference type="Rhea" id="RHEA:47448"/>
        <dbReference type="Rhea" id="RHEA-COMP:10685"/>
        <dbReference type="Rhea" id="RHEA-COMP:10686"/>
        <dbReference type="ChEBI" id="CHEBI:15378"/>
        <dbReference type="ChEBI" id="CHEBI:57692"/>
        <dbReference type="ChEBI" id="CHEBI:58307"/>
        <dbReference type="ChEBI" id="CHEBI:84650"/>
        <dbReference type="ChEBI" id="CHEBI:87701"/>
    </reaction>
    <physiologicalReaction direction="left-to-right" evidence="1">
        <dbReference type="Rhea" id="RHEA:47449"/>
    </physiologicalReaction>
</comment>
<comment type="catalytic activity">
    <reaction evidence="1">
        <text>oxidized [electron-transfer flavoprotein] + (9Z)-octadecenoyl-CoA + H(+) = (2E,9Z)-octadecadienoyl-CoA + reduced [electron-transfer flavoprotein]</text>
        <dbReference type="Rhea" id="RHEA:47300"/>
        <dbReference type="Rhea" id="RHEA-COMP:10685"/>
        <dbReference type="Rhea" id="RHEA-COMP:10686"/>
        <dbReference type="ChEBI" id="CHEBI:15378"/>
        <dbReference type="ChEBI" id="CHEBI:57387"/>
        <dbReference type="ChEBI" id="CHEBI:57692"/>
        <dbReference type="ChEBI" id="CHEBI:58307"/>
        <dbReference type="ChEBI" id="CHEBI:77553"/>
    </reaction>
    <physiologicalReaction direction="left-to-right" evidence="1">
        <dbReference type="Rhea" id="RHEA:47301"/>
    </physiologicalReaction>
</comment>
<comment type="cofactor">
    <cofactor evidence="1">
        <name>FAD</name>
        <dbReference type="ChEBI" id="CHEBI:57692"/>
    </cofactor>
</comment>
<comment type="pathway">
    <text evidence="1">Lipid metabolism; mitochondrial fatty acid beta-oxidation.</text>
</comment>
<comment type="subunit">
    <text evidence="1">Homotetramer.</text>
</comment>
<comment type="subcellular location">
    <subcellularLocation>
        <location evidence="1">Mitochondrion matrix</location>
    </subcellularLocation>
</comment>
<comment type="PTM">
    <text evidence="4">Acetylation at Lys-318 and Lys-322 in proximity of the cofactor-binding sites strongly reduces catalytic activity. These sites are deacetylated by SIRT3.</text>
</comment>
<comment type="similarity">
    <text evidence="5">Belongs to the acyl-CoA dehydrogenase family.</text>
</comment>
<gene>
    <name evidence="3" type="primary">ACADL</name>
</gene>
<reference key="1">
    <citation type="submission" date="1996-12" db="EMBL/GenBank/DDBJ databases">
        <authorList>
            <person name="Suzuki H."/>
            <person name="Hamasima N."/>
            <person name="Kimura M."/>
            <person name="Yasue H."/>
        </authorList>
    </citation>
    <scope>NUCLEOTIDE SEQUENCE [MRNA]</scope>
    <source>
        <tissue>Liver</tissue>
    </source>
</reference>
<organism>
    <name type="scientific">Sus scrofa</name>
    <name type="common">Pig</name>
    <dbReference type="NCBI Taxonomy" id="9823"/>
    <lineage>
        <taxon>Eukaryota</taxon>
        <taxon>Metazoa</taxon>
        <taxon>Chordata</taxon>
        <taxon>Craniata</taxon>
        <taxon>Vertebrata</taxon>
        <taxon>Euteleostomi</taxon>
        <taxon>Mammalia</taxon>
        <taxon>Eutheria</taxon>
        <taxon>Laurasiatheria</taxon>
        <taxon>Artiodactyla</taxon>
        <taxon>Suina</taxon>
        <taxon>Suidae</taxon>
        <taxon>Sus</taxon>
    </lineage>
</organism>
<accession>P79274</accession>
<feature type="transit peptide" description="Mitochondrion" evidence="1">
    <location>
        <begin position="1"/>
        <end position="30"/>
    </location>
</feature>
<feature type="chain" id="PRO_0000000512" description="Long-chain specific acyl-CoA dehydrogenase, mitochondrial">
    <location>
        <begin position="31"/>
        <end position="430"/>
    </location>
</feature>
<feature type="active site" description="Proton acceptor" evidence="2">
    <location>
        <position position="291"/>
    </location>
</feature>
<feature type="binding site" evidence="2">
    <location>
        <begin position="170"/>
        <end position="179"/>
    </location>
    <ligand>
        <name>FAD</name>
        <dbReference type="ChEBI" id="CHEBI:57692"/>
    </ligand>
</feature>
<feature type="binding site" evidence="2">
    <location>
        <position position="179"/>
    </location>
    <ligand>
        <name>substrate</name>
    </ligand>
</feature>
<feature type="binding site" evidence="2">
    <location>
        <begin position="203"/>
        <end position="205"/>
    </location>
    <ligand>
        <name>FAD</name>
        <dbReference type="ChEBI" id="CHEBI:57692"/>
    </ligand>
</feature>
<feature type="binding site" evidence="2">
    <location>
        <begin position="227"/>
        <end position="228"/>
    </location>
    <ligand>
        <name>substrate</name>
    </ligand>
</feature>
<feature type="binding site" evidence="2">
    <location>
        <position position="282"/>
    </location>
    <ligand>
        <name>substrate</name>
    </ligand>
</feature>
<feature type="binding site" evidence="2">
    <location>
        <begin position="289"/>
        <end position="292"/>
    </location>
    <ligand>
        <name>substrate</name>
    </ligand>
</feature>
<feature type="binding site" evidence="2">
    <location>
        <position position="317"/>
    </location>
    <ligand>
        <name>FAD</name>
        <dbReference type="ChEBI" id="CHEBI:57692"/>
    </ligand>
</feature>
<feature type="binding site" evidence="2">
    <location>
        <position position="328"/>
    </location>
    <ligand>
        <name>FAD</name>
        <dbReference type="ChEBI" id="CHEBI:57692"/>
    </ligand>
</feature>
<feature type="binding site" evidence="2">
    <location>
        <begin position="385"/>
        <end position="389"/>
    </location>
    <ligand>
        <name>FAD</name>
        <dbReference type="ChEBI" id="CHEBI:57692"/>
    </ligand>
</feature>
<feature type="binding site" evidence="2">
    <location>
        <begin position="412"/>
        <end position="413"/>
    </location>
    <ligand>
        <name>substrate</name>
    </ligand>
</feature>
<feature type="binding site" evidence="2">
    <location>
        <begin position="414"/>
        <end position="416"/>
    </location>
    <ligand>
        <name>FAD</name>
        <dbReference type="ChEBI" id="CHEBI:57692"/>
    </ligand>
</feature>
<feature type="modified residue" description="N6-acetyllysine" evidence="4">
    <location>
        <position position="42"/>
    </location>
</feature>
<feature type="modified residue" description="Phosphoserine" evidence="1">
    <location>
        <position position="54"/>
    </location>
</feature>
<feature type="modified residue" description="Phosphoserine" evidence="4">
    <location>
        <position position="55"/>
    </location>
</feature>
<feature type="modified residue" description="N6-acetyllysine; alternate" evidence="4">
    <location>
        <position position="66"/>
    </location>
</feature>
<feature type="modified residue" description="N6-succinyllysine; alternate" evidence="4">
    <location>
        <position position="66"/>
    </location>
</feature>
<feature type="modified residue" description="N6-acetyllysine; alternate" evidence="4">
    <location>
        <position position="81"/>
    </location>
</feature>
<feature type="modified residue" description="N6-succinyllysine; alternate" evidence="4">
    <location>
        <position position="81"/>
    </location>
</feature>
<feature type="modified residue" description="N6-acetyllysine" evidence="4">
    <location>
        <position position="92"/>
    </location>
</feature>
<feature type="modified residue" description="N6-acetyllysine" evidence="4">
    <location>
        <position position="95"/>
    </location>
</feature>
<feature type="modified residue" description="N6-succinyllysine" evidence="4">
    <location>
        <position position="165"/>
    </location>
</feature>
<feature type="modified residue" description="N6-succinyllysine" evidence="4">
    <location>
        <position position="240"/>
    </location>
</feature>
<feature type="modified residue" description="N6-acetyllysine; alternate" evidence="4">
    <location>
        <position position="254"/>
    </location>
</feature>
<feature type="modified residue" description="N6-succinyllysine; alternate" evidence="4">
    <location>
        <position position="254"/>
    </location>
</feature>
<feature type="modified residue" description="N6-acetyllysine; alternate" evidence="4">
    <location>
        <position position="279"/>
    </location>
</feature>
<feature type="modified residue" description="N6-succinyllysine; alternate" evidence="4">
    <location>
        <position position="279"/>
    </location>
</feature>
<feature type="modified residue" description="N6-acetyllysine" evidence="4">
    <location>
        <position position="318"/>
    </location>
</feature>
<feature type="modified residue" description="N6-acetyllysine; alternate" evidence="4">
    <location>
        <position position="322"/>
    </location>
</feature>
<feature type="modified residue" description="N6-succinyllysine; alternate" evidence="4">
    <location>
        <position position="322"/>
    </location>
</feature>
<feature type="modified residue" description="N6-acetyllysine" evidence="4">
    <location>
        <position position="358"/>
    </location>
</feature>
<feature type="modified residue" description="Phosphoserine" evidence="4">
    <location>
        <position position="362"/>
    </location>
</feature>
<proteinExistence type="evidence at transcript level"/>
<name>ACADL_PIG</name>
<sequence>MATRLLRGSLRLWGGLCAPRLPTASRCSHSGGEERLESPSAKKLTDIGIRRIFSSEHDIFRESVRKFFQEEVIPHHAEWEKAGEVSRELWEKAGKQGLLGINIAERHGGIGGDLYSAAIVWEEQAYSNCTGPGFSLHSDIVMPYIANYGSEEQIKHFIPQMTAGKCIGAIAMTEPGAGSDLQGVRTNAKKDGSDWILNGSKVFITNGWLSDVVIVVAVTNREARSPAHGISLFLVENGMKGFVKGRKLHKIGLKAQDTAELFFEDVRLPASALLGEENKGFYYLMQELPQERLLIAELAVSASEFMFEETRNYVKQRKAFGKTVAHIQTVQHKLAELKTHICVTRAFVDSCLQLHETKRLESAAASMAKYWASELQNSVAYDCVQLHGGWGYMWEYPIARAYVDARVQPIYGGTNEIMKELIAREIVHDK</sequence>
<evidence type="ECO:0000250" key="1">
    <source>
        <dbReference type="UniProtKB" id="P15650"/>
    </source>
</evidence>
<evidence type="ECO:0000250" key="2">
    <source>
        <dbReference type="UniProtKB" id="P26440"/>
    </source>
</evidence>
<evidence type="ECO:0000250" key="3">
    <source>
        <dbReference type="UniProtKB" id="P28330"/>
    </source>
</evidence>
<evidence type="ECO:0000250" key="4">
    <source>
        <dbReference type="UniProtKB" id="P51174"/>
    </source>
</evidence>
<evidence type="ECO:0000305" key="5"/>
<keyword id="KW-0007">Acetylation</keyword>
<keyword id="KW-0274">FAD</keyword>
<keyword id="KW-0276">Fatty acid metabolism</keyword>
<keyword id="KW-0285">Flavoprotein</keyword>
<keyword id="KW-0443">Lipid metabolism</keyword>
<keyword id="KW-0496">Mitochondrion</keyword>
<keyword id="KW-0560">Oxidoreductase</keyword>
<keyword id="KW-0597">Phosphoprotein</keyword>
<keyword id="KW-1185">Reference proteome</keyword>
<keyword id="KW-0809">Transit peptide</keyword>